<reference key="1">
    <citation type="journal article" date="2006" name="J. Bacteriol.">
        <title>The genome sequence of the obligately chemolithoautotrophic, facultatively anaerobic bacterium Thiobacillus denitrificans.</title>
        <authorList>
            <person name="Beller H.R."/>
            <person name="Chain P.S."/>
            <person name="Letain T.E."/>
            <person name="Chakicherla A."/>
            <person name="Larimer F.W."/>
            <person name="Richardson P.M."/>
            <person name="Coleman M.A."/>
            <person name="Wood A.P."/>
            <person name="Kelly D.P."/>
        </authorList>
    </citation>
    <scope>NUCLEOTIDE SEQUENCE [LARGE SCALE GENOMIC DNA]</scope>
    <source>
        <strain>ATCC 25259 / T1</strain>
    </source>
</reference>
<keyword id="KW-1185">Reference proteome</keyword>
<name>APAG_THIDA</name>
<proteinExistence type="inferred from homology"/>
<protein>
    <recommendedName>
        <fullName evidence="1">Protein ApaG</fullName>
    </recommendedName>
</protein>
<gene>
    <name evidence="1" type="primary">apaG</name>
    <name type="ordered locus">Tbd_2231</name>
</gene>
<sequence>MAEGKKYQINISVNTAYLAEQSDPSADRYVFAYTITIENVGTVAAQLISRHWVITDADDVVQEVKGLGVVGEQPLLRPGETFEYSSGAALATPVGTMQGSYQMVAEDGNKFDAEIPRFTLAMPRVLH</sequence>
<evidence type="ECO:0000255" key="1">
    <source>
        <dbReference type="HAMAP-Rule" id="MF_00791"/>
    </source>
</evidence>
<dbReference type="EMBL" id="CP000116">
    <property type="protein sequence ID" value="AAZ98184.1"/>
    <property type="molecule type" value="Genomic_DNA"/>
</dbReference>
<dbReference type="RefSeq" id="WP_011312743.1">
    <property type="nucleotide sequence ID" value="NC_007404.1"/>
</dbReference>
<dbReference type="SMR" id="Q3SGR3"/>
<dbReference type="STRING" id="292415.Tbd_2231"/>
<dbReference type="KEGG" id="tbd:Tbd_2231"/>
<dbReference type="eggNOG" id="COG2967">
    <property type="taxonomic scope" value="Bacteria"/>
</dbReference>
<dbReference type="HOGENOM" id="CLU_128074_0_0_4"/>
<dbReference type="OrthoDB" id="9795226at2"/>
<dbReference type="Proteomes" id="UP000008291">
    <property type="component" value="Chromosome"/>
</dbReference>
<dbReference type="GO" id="GO:0070987">
    <property type="term" value="P:error-free translesion synthesis"/>
    <property type="evidence" value="ECO:0007669"/>
    <property type="project" value="TreeGrafter"/>
</dbReference>
<dbReference type="Gene3D" id="2.60.40.1470">
    <property type="entry name" value="ApaG domain"/>
    <property type="match status" value="1"/>
</dbReference>
<dbReference type="HAMAP" id="MF_00791">
    <property type="entry name" value="ApaG"/>
    <property type="match status" value="1"/>
</dbReference>
<dbReference type="InterPro" id="IPR007474">
    <property type="entry name" value="ApaG_domain"/>
</dbReference>
<dbReference type="InterPro" id="IPR036767">
    <property type="entry name" value="ApaG_sf"/>
</dbReference>
<dbReference type="InterPro" id="IPR023065">
    <property type="entry name" value="Uncharacterised_ApaG"/>
</dbReference>
<dbReference type="NCBIfam" id="NF003967">
    <property type="entry name" value="PRK05461.1"/>
    <property type="match status" value="1"/>
</dbReference>
<dbReference type="PANTHER" id="PTHR14289">
    <property type="entry name" value="F-BOX ONLY PROTEIN 3"/>
    <property type="match status" value="1"/>
</dbReference>
<dbReference type="PANTHER" id="PTHR14289:SF16">
    <property type="entry name" value="POLYMERASE DELTA-INTERACTING PROTEIN 2"/>
    <property type="match status" value="1"/>
</dbReference>
<dbReference type="Pfam" id="PF04379">
    <property type="entry name" value="DUF525"/>
    <property type="match status" value="1"/>
</dbReference>
<dbReference type="SUPFAM" id="SSF110069">
    <property type="entry name" value="ApaG-like"/>
    <property type="match status" value="1"/>
</dbReference>
<dbReference type="PROSITE" id="PS51087">
    <property type="entry name" value="APAG"/>
    <property type="match status" value="1"/>
</dbReference>
<feature type="chain" id="PRO_1000083665" description="Protein ApaG">
    <location>
        <begin position="1"/>
        <end position="127"/>
    </location>
</feature>
<feature type="domain" description="ApaG" evidence="1">
    <location>
        <begin position="3"/>
        <end position="127"/>
    </location>
</feature>
<organism>
    <name type="scientific">Thiobacillus denitrificans (strain ATCC 25259 / T1)</name>
    <dbReference type="NCBI Taxonomy" id="292415"/>
    <lineage>
        <taxon>Bacteria</taxon>
        <taxon>Pseudomonadati</taxon>
        <taxon>Pseudomonadota</taxon>
        <taxon>Betaproteobacteria</taxon>
        <taxon>Nitrosomonadales</taxon>
        <taxon>Thiobacillaceae</taxon>
        <taxon>Thiobacillus</taxon>
    </lineage>
</organism>
<accession>Q3SGR3</accession>